<comment type="function">
    <text evidence="1">One of the early assembly proteins it binds 23S rRNA. One of the proteins that surrounds the polypeptide exit tunnel on the outside of the ribosome. Forms the main docking site for trigger factor binding to the ribosome.</text>
</comment>
<comment type="subunit">
    <text evidence="1">Part of the 50S ribosomal subunit. Contacts protein L29, and trigger factor when it is bound to the ribosome.</text>
</comment>
<comment type="similarity">
    <text evidence="1">Belongs to the universal ribosomal protein uL23 family.</text>
</comment>
<feature type="chain" id="PRO_0000129405" description="Large ribosomal subunit protein uL23">
    <location>
        <begin position="1"/>
        <end position="111"/>
    </location>
</feature>
<sequence length="111" mass="12235">MKDPYDVVKRHYVTEKAKMLEGLSLGDGEGKKKGSFCKDPKYIFIVAGDATKPMIAEAIEAIYSAKGVKVKKVNTMCVKPQPTRIFRGRRKGRTAGFKKAIVTFVDGHSIG</sequence>
<accession>O84531</accession>
<dbReference type="EMBL" id="AE001273">
    <property type="protein sequence ID" value="AAC68127.1"/>
    <property type="molecule type" value="Genomic_DNA"/>
</dbReference>
<dbReference type="PIR" id="D71507">
    <property type="entry name" value="D71507"/>
</dbReference>
<dbReference type="RefSeq" id="NP_220041.1">
    <property type="nucleotide sequence ID" value="NC_000117.1"/>
</dbReference>
<dbReference type="RefSeq" id="WP_009871890.1">
    <property type="nucleotide sequence ID" value="NC_000117.1"/>
</dbReference>
<dbReference type="SMR" id="O84531"/>
<dbReference type="FunCoup" id="O84531">
    <property type="interactions" value="224"/>
</dbReference>
<dbReference type="STRING" id="272561.CT_526"/>
<dbReference type="EnsemblBacteria" id="AAC68127">
    <property type="protein sequence ID" value="AAC68127"/>
    <property type="gene ID" value="CT_526"/>
</dbReference>
<dbReference type="GeneID" id="884302"/>
<dbReference type="KEGG" id="ctr:CT_526"/>
<dbReference type="PATRIC" id="fig|272561.5.peg.570"/>
<dbReference type="HOGENOM" id="CLU_037562_3_1_0"/>
<dbReference type="InParanoid" id="O84531"/>
<dbReference type="OrthoDB" id="9793353at2"/>
<dbReference type="Proteomes" id="UP000000431">
    <property type="component" value="Chromosome"/>
</dbReference>
<dbReference type="GO" id="GO:1990904">
    <property type="term" value="C:ribonucleoprotein complex"/>
    <property type="evidence" value="ECO:0007669"/>
    <property type="project" value="UniProtKB-KW"/>
</dbReference>
<dbReference type="GO" id="GO:0005840">
    <property type="term" value="C:ribosome"/>
    <property type="evidence" value="ECO:0007669"/>
    <property type="project" value="UniProtKB-KW"/>
</dbReference>
<dbReference type="GO" id="GO:0019843">
    <property type="term" value="F:rRNA binding"/>
    <property type="evidence" value="ECO:0007669"/>
    <property type="project" value="UniProtKB-UniRule"/>
</dbReference>
<dbReference type="GO" id="GO:0003735">
    <property type="term" value="F:structural constituent of ribosome"/>
    <property type="evidence" value="ECO:0007669"/>
    <property type="project" value="InterPro"/>
</dbReference>
<dbReference type="GO" id="GO:0006412">
    <property type="term" value="P:translation"/>
    <property type="evidence" value="ECO:0007669"/>
    <property type="project" value="UniProtKB-UniRule"/>
</dbReference>
<dbReference type="Gene3D" id="3.30.70.330">
    <property type="match status" value="1"/>
</dbReference>
<dbReference type="HAMAP" id="MF_01369_B">
    <property type="entry name" value="Ribosomal_uL23_B"/>
    <property type="match status" value="1"/>
</dbReference>
<dbReference type="InterPro" id="IPR012677">
    <property type="entry name" value="Nucleotide-bd_a/b_plait_sf"/>
</dbReference>
<dbReference type="InterPro" id="IPR013025">
    <property type="entry name" value="Ribosomal_uL23-like"/>
</dbReference>
<dbReference type="InterPro" id="IPR012678">
    <property type="entry name" value="Ribosomal_uL23/eL15/eS24_sf"/>
</dbReference>
<dbReference type="NCBIfam" id="NF004362">
    <property type="entry name" value="PRK05738.2-2"/>
    <property type="match status" value="1"/>
</dbReference>
<dbReference type="Pfam" id="PF00276">
    <property type="entry name" value="Ribosomal_L23"/>
    <property type="match status" value="1"/>
</dbReference>
<dbReference type="SUPFAM" id="SSF54189">
    <property type="entry name" value="Ribosomal proteins S24e, L23 and L15e"/>
    <property type="match status" value="1"/>
</dbReference>
<proteinExistence type="inferred from homology"/>
<keyword id="KW-1185">Reference proteome</keyword>
<keyword id="KW-0687">Ribonucleoprotein</keyword>
<keyword id="KW-0689">Ribosomal protein</keyword>
<keyword id="KW-0694">RNA-binding</keyword>
<keyword id="KW-0699">rRNA-binding</keyword>
<organism>
    <name type="scientific">Chlamydia trachomatis serovar D (strain ATCC VR-885 / DSM 19411 / UW-3/Cx)</name>
    <dbReference type="NCBI Taxonomy" id="272561"/>
    <lineage>
        <taxon>Bacteria</taxon>
        <taxon>Pseudomonadati</taxon>
        <taxon>Chlamydiota</taxon>
        <taxon>Chlamydiia</taxon>
        <taxon>Chlamydiales</taxon>
        <taxon>Chlamydiaceae</taxon>
        <taxon>Chlamydia/Chlamydophila group</taxon>
        <taxon>Chlamydia</taxon>
    </lineage>
</organism>
<reference key="1">
    <citation type="journal article" date="1998" name="Science">
        <title>Genome sequence of an obligate intracellular pathogen of humans: Chlamydia trachomatis.</title>
        <authorList>
            <person name="Stephens R.S."/>
            <person name="Kalman S."/>
            <person name="Lammel C.J."/>
            <person name="Fan J."/>
            <person name="Marathe R."/>
            <person name="Aravind L."/>
            <person name="Mitchell W.P."/>
            <person name="Olinger L."/>
            <person name="Tatusov R.L."/>
            <person name="Zhao Q."/>
            <person name="Koonin E.V."/>
            <person name="Davis R.W."/>
        </authorList>
    </citation>
    <scope>NUCLEOTIDE SEQUENCE [LARGE SCALE GENOMIC DNA]</scope>
    <source>
        <strain>ATCC VR-885 / DSM 19411 / UW-3/Cx</strain>
    </source>
</reference>
<name>RL23_CHLTR</name>
<gene>
    <name evidence="1" type="primary">rplW</name>
    <name type="synonym">rl23</name>
    <name type="ordered locus">CT_526</name>
</gene>
<evidence type="ECO:0000255" key="1">
    <source>
        <dbReference type="HAMAP-Rule" id="MF_01369"/>
    </source>
</evidence>
<evidence type="ECO:0000305" key="2"/>
<protein>
    <recommendedName>
        <fullName evidence="1">Large ribosomal subunit protein uL23</fullName>
    </recommendedName>
    <alternativeName>
        <fullName evidence="2">50S ribosomal protein L23</fullName>
    </alternativeName>
</protein>